<protein>
    <recommendedName>
        <fullName evidence="1">NADH-quinone oxidoreductase subunit I 2</fullName>
        <ecNumber evidence="1">7.1.1.-</ecNumber>
    </recommendedName>
    <alternativeName>
        <fullName evidence="1">NADH dehydrogenase I subunit I 2</fullName>
    </alternativeName>
    <alternativeName>
        <fullName evidence="1">NDH-1 subunit I 2</fullName>
    </alternativeName>
</protein>
<name>NUOI2_GEOSL</name>
<accession>Q746T4</accession>
<dbReference type="EC" id="7.1.1.-" evidence="1"/>
<dbReference type="EMBL" id="AE017180">
    <property type="protein sequence ID" value="AAR36824.1"/>
    <property type="molecule type" value="Genomic_DNA"/>
</dbReference>
<dbReference type="RefSeq" id="NP_954474.1">
    <property type="nucleotide sequence ID" value="NC_002939.5"/>
</dbReference>
<dbReference type="SMR" id="Q746T4"/>
<dbReference type="FunCoup" id="Q746T4">
    <property type="interactions" value="415"/>
</dbReference>
<dbReference type="STRING" id="243231.GSU3434"/>
<dbReference type="TCDB" id="3.D.1.5.1">
    <property type="family name" value="the h+ or na+-translocating nadh dehydrogenase (ndh) family"/>
</dbReference>
<dbReference type="EnsemblBacteria" id="AAR36824">
    <property type="protein sequence ID" value="AAR36824"/>
    <property type="gene ID" value="GSU3434"/>
</dbReference>
<dbReference type="KEGG" id="gsu:GSU3434"/>
<dbReference type="PATRIC" id="fig|243231.5.peg.3456"/>
<dbReference type="eggNOG" id="COG1143">
    <property type="taxonomic scope" value="Bacteria"/>
</dbReference>
<dbReference type="HOGENOM" id="CLU_067218_4_3_7"/>
<dbReference type="InParanoid" id="Q746T4"/>
<dbReference type="OrthoDB" id="9808559at2"/>
<dbReference type="Proteomes" id="UP000000577">
    <property type="component" value="Chromosome"/>
</dbReference>
<dbReference type="GO" id="GO:0005886">
    <property type="term" value="C:plasma membrane"/>
    <property type="evidence" value="ECO:0007669"/>
    <property type="project" value="UniProtKB-SubCell"/>
</dbReference>
<dbReference type="GO" id="GO:0051539">
    <property type="term" value="F:4 iron, 4 sulfur cluster binding"/>
    <property type="evidence" value="ECO:0007669"/>
    <property type="project" value="UniProtKB-KW"/>
</dbReference>
<dbReference type="GO" id="GO:0005506">
    <property type="term" value="F:iron ion binding"/>
    <property type="evidence" value="ECO:0007669"/>
    <property type="project" value="UniProtKB-UniRule"/>
</dbReference>
<dbReference type="GO" id="GO:0050136">
    <property type="term" value="F:NADH:ubiquinone reductase (non-electrogenic) activity"/>
    <property type="evidence" value="ECO:0007669"/>
    <property type="project" value="UniProtKB-UniRule"/>
</dbReference>
<dbReference type="GO" id="GO:0048038">
    <property type="term" value="F:quinone binding"/>
    <property type="evidence" value="ECO:0007669"/>
    <property type="project" value="UniProtKB-KW"/>
</dbReference>
<dbReference type="GO" id="GO:0009060">
    <property type="term" value="P:aerobic respiration"/>
    <property type="evidence" value="ECO:0000318"/>
    <property type="project" value="GO_Central"/>
</dbReference>
<dbReference type="FunFam" id="3.30.70.3270:FF:000002">
    <property type="entry name" value="NADH-quinone oxidoreductase subunit I"/>
    <property type="match status" value="1"/>
</dbReference>
<dbReference type="Gene3D" id="3.30.70.3270">
    <property type="match status" value="1"/>
</dbReference>
<dbReference type="HAMAP" id="MF_01351">
    <property type="entry name" value="NDH1_NuoI"/>
    <property type="match status" value="1"/>
</dbReference>
<dbReference type="InterPro" id="IPR017896">
    <property type="entry name" value="4Fe4S_Fe-S-bd"/>
</dbReference>
<dbReference type="InterPro" id="IPR017900">
    <property type="entry name" value="4Fe4S_Fe_S_CS"/>
</dbReference>
<dbReference type="InterPro" id="IPR010226">
    <property type="entry name" value="NADH_quinone_OxRdtase_chainI"/>
</dbReference>
<dbReference type="NCBIfam" id="TIGR01971">
    <property type="entry name" value="NuoI"/>
    <property type="match status" value="1"/>
</dbReference>
<dbReference type="NCBIfam" id="NF004536">
    <property type="entry name" value="PRK05888.1-1"/>
    <property type="match status" value="1"/>
</dbReference>
<dbReference type="PANTHER" id="PTHR10849:SF20">
    <property type="entry name" value="NADH DEHYDROGENASE [UBIQUINONE] IRON-SULFUR PROTEIN 8, MITOCHONDRIAL"/>
    <property type="match status" value="1"/>
</dbReference>
<dbReference type="PANTHER" id="PTHR10849">
    <property type="entry name" value="NADH DEHYDROGENASE UBIQUINONE IRON-SULFUR PROTEIN 8, MITOCHONDRIAL"/>
    <property type="match status" value="1"/>
</dbReference>
<dbReference type="Pfam" id="PF12838">
    <property type="entry name" value="Fer4_7"/>
    <property type="match status" value="1"/>
</dbReference>
<dbReference type="SUPFAM" id="SSF54862">
    <property type="entry name" value="4Fe-4S ferredoxins"/>
    <property type="match status" value="1"/>
</dbReference>
<dbReference type="PROSITE" id="PS00198">
    <property type="entry name" value="4FE4S_FER_1"/>
    <property type="match status" value="2"/>
</dbReference>
<dbReference type="PROSITE" id="PS51379">
    <property type="entry name" value="4FE4S_FER_2"/>
    <property type="match status" value="2"/>
</dbReference>
<proteinExistence type="inferred from homology"/>
<comment type="function">
    <text evidence="1">NDH-1 shuttles electrons from NADH, via FMN and iron-sulfur (Fe-S) centers, to quinones in the respiratory chain. The immediate electron acceptor for the enzyme in this species is believed to be ubiquinone. Couples the redox reaction to proton translocation (for every two electrons transferred, four hydrogen ions are translocated across the cytoplasmic membrane), and thus conserves the redox energy in a proton gradient.</text>
</comment>
<comment type="catalytic activity">
    <reaction evidence="1">
        <text>a quinone + NADH + 5 H(+)(in) = a quinol + NAD(+) + 4 H(+)(out)</text>
        <dbReference type="Rhea" id="RHEA:57888"/>
        <dbReference type="ChEBI" id="CHEBI:15378"/>
        <dbReference type="ChEBI" id="CHEBI:24646"/>
        <dbReference type="ChEBI" id="CHEBI:57540"/>
        <dbReference type="ChEBI" id="CHEBI:57945"/>
        <dbReference type="ChEBI" id="CHEBI:132124"/>
    </reaction>
</comment>
<comment type="cofactor">
    <cofactor evidence="1">
        <name>[4Fe-4S] cluster</name>
        <dbReference type="ChEBI" id="CHEBI:49883"/>
    </cofactor>
    <text evidence="1">Binds 2 [4Fe-4S] clusters per subunit.</text>
</comment>
<comment type="subunit">
    <text evidence="1">NDH-1 is composed of 14 different subunits. Subunits NuoA, H, J, K, L, M, N constitute the membrane sector of the complex.</text>
</comment>
<comment type="subcellular location">
    <subcellularLocation>
        <location evidence="1">Cell inner membrane</location>
        <topology evidence="1">Peripheral membrane protein</topology>
    </subcellularLocation>
</comment>
<comment type="similarity">
    <text evidence="1">Belongs to the complex I 23 kDa subunit family.</text>
</comment>
<sequence>MPILTDFKAIATGLFVTWKHIFRRPVTVEYPEVKRTPAPRYRARIVLTRDPDGGERCVACYLCSAACPVDCISMEAAEGEEGRRYARWFRINFSRCIFCGLCAEACPTLAIQMTPDYEICERDIMELVYEKEDLLIDGCGKDAGYNFYRHAGIGVAQPRGAGECEEEPVDVRGLMP</sequence>
<reference key="1">
    <citation type="journal article" date="2003" name="Science">
        <title>Genome of Geobacter sulfurreducens: metal reduction in subsurface environments.</title>
        <authorList>
            <person name="Methe B.A."/>
            <person name="Nelson K.E."/>
            <person name="Eisen J.A."/>
            <person name="Paulsen I.T."/>
            <person name="Nelson W.C."/>
            <person name="Heidelberg J.F."/>
            <person name="Wu D."/>
            <person name="Wu M."/>
            <person name="Ward N.L."/>
            <person name="Beanan M.J."/>
            <person name="Dodson R.J."/>
            <person name="Madupu R."/>
            <person name="Brinkac L.M."/>
            <person name="Daugherty S.C."/>
            <person name="DeBoy R.T."/>
            <person name="Durkin A.S."/>
            <person name="Gwinn M.L."/>
            <person name="Kolonay J.F."/>
            <person name="Sullivan S.A."/>
            <person name="Haft D.H."/>
            <person name="Selengut J."/>
            <person name="Davidsen T.M."/>
            <person name="Zafar N."/>
            <person name="White O."/>
            <person name="Tran B."/>
            <person name="Romero C."/>
            <person name="Forberger H.A."/>
            <person name="Weidman J.F."/>
            <person name="Khouri H.M."/>
            <person name="Feldblyum T.V."/>
            <person name="Utterback T.R."/>
            <person name="Van Aken S.E."/>
            <person name="Lovley D.R."/>
            <person name="Fraser C.M."/>
        </authorList>
    </citation>
    <scope>NUCLEOTIDE SEQUENCE [LARGE SCALE GENOMIC DNA]</scope>
    <source>
        <strain>ATCC 51573 / DSM 12127 / PCA</strain>
    </source>
</reference>
<feature type="chain" id="PRO_0000245710" description="NADH-quinone oxidoreductase subunit I 2">
    <location>
        <begin position="1"/>
        <end position="176"/>
    </location>
</feature>
<feature type="domain" description="4Fe-4S ferredoxin-type 1" evidence="1">
    <location>
        <begin position="45"/>
        <end position="77"/>
    </location>
</feature>
<feature type="domain" description="4Fe-4S ferredoxin-type 2" evidence="1">
    <location>
        <begin position="87"/>
        <end position="116"/>
    </location>
</feature>
<feature type="binding site" evidence="1">
    <location>
        <position position="57"/>
    </location>
    <ligand>
        <name>[4Fe-4S] cluster</name>
        <dbReference type="ChEBI" id="CHEBI:49883"/>
        <label>1</label>
    </ligand>
</feature>
<feature type="binding site" evidence="1">
    <location>
        <position position="60"/>
    </location>
    <ligand>
        <name>[4Fe-4S] cluster</name>
        <dbReference type="ChEBI" id="CHEBI:49883"/>
        <label>1</label>
    </ligand>
</feature>
<feature type="binding site" evidence="1">
    <location>
        <position position="63"/>
    </location>
    <ligand>
        <name>[4Fe-4S] cluster</name>
        <dbReference type="ChEBI" id="CHEBI:49883"/>
        <label>1</label>
    </ligand>
</feature>
<feature type="binding site" evidence="1">
    <location>
        <position position="67"/>
    </location>
    <ligand>
        <name>[4Fe-4S] cluster</name>
        <dbReference type="ChEBI" id="CHEBI:49883"/>
        <label>2</label>
    </ligand>
</feature>
<feature type="binding site" evidence="1">
    <location>
        <position position="96"/>
    </location>
    <ligand>
        <name>[4Fe-4S] cluster</name>
        <dbReference type="ChEBI" id="CHEBI:49883"/>
        <label>2</label>
    </ligand>
</feature>
<feature type="binding site" evidence="1">
    <location>
        <position position="99"/>
    </location>
    <ligand>
        <name>[4Fe-4S] cluster</name>
        <dbReference type="ChEBI" id="CHEBI:49883"/>
        <label>2</label>
    </ligand>
</feature>
<feature type="binding site" evidence="1">
    <location>
        <position position="102"/>
    </location>
    <ligand>
        <name>[4Fe-4S] cluster</name>
        <dbReference type="ChEBI" id="CHEBI:49883"/>
        <label>2</label>
    </ligand>
</feature>
<feature type="binding site" evidence="1">
    <location>
        <position position="106"/>
    </location>
    <ligand>
        <name>[4Fe-4S] cluster</name>
        <dbReference type="ChEBI" id="CHEBI:49883"/>
        <label>1</label>
    </ligand>
</feature>
<keyword id="KW-0004">4Fe-4S</keyword>
<keyword id="KW-0997">Cell inner membrane</keyword>
<keyword id="KW-1003">Cell membrane</keyword>
<keyword id="KW-0408">Iron</keyword>
<keyword id="KW-0411">Iron-sulfur</keyword>
<keyword id="KW-0472">Membrane</keyword>
<keyword id="KW-0479">Metal-binding</keyword>
<keyword id="KW-0520">NAD</keyword>
<keyword id="KW-0874">Quinone</keyword>
<keyword id="KW-1185">Reference proteome</keyword>
<keyword id="KW-0677">Repeat</keyword>
<keyword id="KW-1278">Translocase</keyword>
<keyword id="KW-0830">Ubiquinone</keyword>
<gene>
    <name evidence="1" type="primary">nuoI2</name>
    <name type="ordered locus">GSU3434</name>
</gene>
<organism>
    <name type="scientific">Geobacter sulfurreducens (strain ATCC 51573 / DSM 12127 / PCA)</name>
    <dbReference type="NCBI Taxonomy" id="243231"/>
    <lineage>
        <taxon>Bacteria</taxon>
        <taxon>Pseudomonadati</taxon>
        <taxon>Thermodesulfobacteriota</taxon>
        <taxon>Desulfuromonadia</taxon>
        <taxon>Geobacterales</taxon>
        <taxon>Geobacteraceae</taxon>
        <taxon>Geobacter</taxon>
    </lineage>
</organism>
<evidence type="ECO:0000255" key="1">
    <source>
        <dbReference type="HAMAP-Rule" id="MF_01351"/>
    </source>
</evidence>